<feature type="chain" id="PRO_0000130931" description="Small ribosomal subunit protein uS14B">
    <location>
        <begin position="1"/>
        <end position="61"/>
    </location>
</feature>
<feature type="binding site" evidence="1">
    <location>
        <position position="24"/>
    </location>
    <ligand>
        <name>Zn(2+)</name>
        <dbReference type="ChEBI" id="CHEBI:29105"/>
    </ligand>
</feature>
<feature type="binding site" evidence="1">
    <location>
        <position position="27"/>
    </location>
    <ligand>
        <name>Zn(2+)</name>
        <dbReference type="ChEBI" id="CHEBI:29105"/>
    </ligand>
</feature>
<feature type="binding site" evidence="1">
    <location>
        <position position="40"/>
    </location>
    <ligand>
        <name>Zn(2+)</name>
        <dbReference type="ChEBI" id="CHEBI:29105"/>
    </ligand>
</feature>
<feature type="binding site" evidence="1">
    <location>
        <position position="43"/>
    </location>
    <ligand>
        <name>Zn(2+)</name>
        <dbReference type="ChEBI" id="CHEBI:29105"/>
    </ligand>
</feature>
<proteinExistence type="evidence at protein level"/>
<organism>
    <name type="scientific">Staphylococcus aureus (strain MW2)</name>
    <dbReference type="NCBI Taxonomy" id="196620"/>
    <lineage>
        <taxon>Bacteria</taxon>
        <taxon>Bacillati</taxon>
        <taxon>Bacillota</taxon>
        <taxon>Bacilli</taxon>
        <taxon>Bacillales</taxon>
        <taxon>Staphylococcaceae</taxon>
        <taxon>Staphylococcus</taxon>
    </lineage>
</organism>
<dbReference type="EMBL" id="BA000033">
    <property type="protein sequence ID" value="BAB96021.1"/>
    <property type="molecule type" value="Genomic_DNA"/>
</dbReference>
<dbReference type="RefSeq" id="WP_001140799.1">
    <property type="nucleotide sequence ID" value="NC_003923.1"/>
</dbReference>
<dbReference type="PDB" id="8Y38">
    <property type="method" value="EM"/>
    <property type="resolution" value="2.58 A"/>
    <property type="chains" value="n=1-61"/>
</dbReference>
<dbReference type="PDB" id="8Y39">
    <property type="method" value="EM"/>
    <property type="resolution" value="3.60 A"/>
    <property type="chains" value="n=1-61"/>
</dbReference>
<dbReference type="PDBsum" id="8Y38"/>
<dbReference type="PDBsum" id="8Y39"/>
<dbReference type="EMDB" id="EMD-38875"/>
<dbReference type="EMDB" id="EMD-38876"/>
<dbReference type="SMR" id="P66413"/>
<dbReference type="KEGG" id="sam:MW2156"/>
<dbReference type="HOGENOM" id="CLU_139869_3_0_9"/>
<dbReference type="GO" id="GO:0015935">
    <property type="term" value="C:small ribosomal subunit"/>
    <property type="evidence" value="ECO:0007669"/>
    <property type="project" value="TreeGrafter"/>
</dbReference>
<dbReference type="GO" id="GO:0019843">
    <property type="term" value="F:rRNA binding"/>
    <property type="evidence" value="ECO:0007669"/>
    <property type="project" value="UniProtKB-UniRule"/>
</dbReference>
<dbReference type="GO" id="GO:0003735">
    <property type="term" value="F:structural constituent of ribosome"/>
    <property type="evidence" value="ECO:0007669"/>
    <property type="project" value="InterPro"/>
</dbReference>
<dbReference type="GO" id="GO:0008270">
    <property type="term" value="F:zinc ion binding"/>
    <property type="evidence" value="ECO:0007669"/>
    <property type="project" value="UniProtKB-UniRule"/>
</dbReference>
<dbReference type="GO" id="GO:0006412">
    <property type="term" value="P:translation"/>
    <property type="evidence" value="ECO:0007669"/>
    <property type="project" value="UniProtKB-UniRule"/>
</dbReference>
<dbReference type="FunFam" id="4.10.830.10:FF:000001">
    <property type="entry name" value="30S ribosomal protein S14 type Z"/>
    <property type="match status" value="1"/>
</dbReference>
<dbReference type="Gene3D" id="4.10.830.10">
    <property type="entry name" value="30s Ribosomal Protein S14, Chain N"/>
    <property type="match status" value="1"/>
</dbReference>
<dbReference type="HAMAP" id="MF_01364_B">
    <property type="entry name" value="Ribosomal_uS14_2_B"/>
    <property type="match status" value="1"/>
</dbReference>
<dbReference type="InterPro" id="IPR001209">
    <property type="entry name" value="Ribosomal_uS14"/>
</dbReference>
<dbReference type="InterPro" id="IPR023053">
    <property type="entry name" value="Ribosomal_uS14_bact"/>
</dbReference>
<dbReference type="InterPro" id="IPR018271">
    <property type="entry name" value="Ribosomal_uS14_CS"/>
</dbReference>
<dbReference type="InterPro" id="IPR043140">
    <property type="entry name" value="Ribosomal_uS14_sf"/>
</dbReference>
<dbReference type="NCBIfam" id="NF005974">
    <property type="entry name" value="PRK08061.1"/>
    <property type="match status" value="1"/>
</dbReference>
<dbReference type="PANTHER" id="PTHR19836">
    <property type="entry name" value="30S RIBOSOMAL PROTEIN S14"/>
    <property type="match status" value="1"/>
</dbReference>
<dbReference type="PANTHER" id="PTHR19836:SF26">
    <property type="entry name" value="SMALL RIBOSOMAL SUBUNIT PROTEIN US14B"/>
    <property type="match status" value="1"/>
</dbReference>
<dbReference type="Pfam" id="PF00253">
    <property type="entry name" value="Ribosomal_S14"/>
    <property type="match status" value="1"/>
</dbReference>
<dbReference type="SUPFAM" id="SSF57716">
    <property type="entry name" value="Glucocorticoid receptor-like (DNA-binding domain)"/>
    <property type="match status" value="1"/>
</dbReference>
<dbReference type="PROSITE" id="PS00527">
    <property type="entry name" value="RIBOSOMAL_S14"/>
    <property type="match status" value="1"/>
</dbReference>
<protein>
    <recommendedName>
        <fullName evidence="1">Small ribosomal subunit protein uS14B</fullName>
    </recommendedName>
    <alternativeName>
        <fullName evidence="2">30S ribosomal protein S14 type Z</fullName>
    </alternativeName>
</protein>
<keyword id="KW-0002">3D-structure</keyword>
<keyword id="KW-0479">Metal-binding</keyword>
<keyword id="KW-0687">Ribonucleoprotein</keyword>
<keyword id="KW-0689">Ribosomal protein</keyword>
<keyword id="KW-0694">RNA-binding</keyword>
<keyword id="KW-0699">rRNA-binding</keyword>
<keyword id="KW-0862">Zinc</keyword>
<reference key="1">
    <citation type="journal article" date="2002" name="Lancet">
        <title>Genome and virulence determinants of high virulence community-acquired MRSA.</title>
        <authorList>
            <person name="Baba T."/>
            <person name="Takeuchi F."/>
            <person name="Kuroda M."/>
            <person name="Yuzawa H."/>
            <person name="Aoki K."/>
            <person name="Oguchi A."/>
            <person name="Nagai Y."/>
            <person name="Iwama N."/>
            <person name="Asano K."/>
            <person name="Naimi T."/>
            <person name="Kuroda H."/>
            <person name="Cui L."/>
            <person name="Yamamoto K."/>
            <person name="Hiramatsu K."/>
        </authorList>
    </citation>
    <scope>NUCLEOTIDE SEQUENCE [LARGE SCALE GENOMIC DNA]</scope>
    <source>
        <strain>MW2</strain>
    </source>
</reference>
<name>RS14Z_STAAW</name>
<gene>
    <name evidence="1" type="primary">rpsZ</name>
    <name evidence="1" type="synonym">rpsN1</name>
    <name type="ordered locus">MW2156</name>
</gene>
<comment type="function">
    <text evidence="1">Binds 16S rRNA, required for the assembly of 30S particles and may also be responsible for determining the conformation of the 16S rRNA at the A site.</text>
</comment>
<comment type="cofactor">
    <cofactor evidence="1">
        <name>Zn(2+)</name>
        <dbReference type="ChEBI" id="CHEBI:29105"/>
    </cofactor>
    <text evidence="1">Binds 1 zinc ion per subunit.</text>
</comment>
<comment type="subunit">
    <text evidence="1">Part of the 30S ribosomal subunit. Contacts proteins S3 and S10.</text>
</comment>
<comment type="similarity">
    <text evidence="1">Belongs to the universal ribosomal protein uS14 family. Zinc-binding uS14 subfamily.</text>
</comment>
<accession>P66413</accession>
<accession>Q99S34</accession>
<sequence length="61" mass="7300">MAKTSMVAKQQKKQKYAVREYTRCERCGRPHSVYRKFKLCRICFRELAYKGQIPGVRKASW</sequence>
<evidence type="ECO:0000255" key="1">
    <source>
        <dbReference type="HAMAP-Rule" id="MF_01364"/>
    </source>
</evidence>
<evidence type="ECO:0000305" key="2"/>